<comment type="function">
    <text evidence="1">A core subunit of photosystem II (PSII), probably helps stabilize the reaction center.</text>
</comment>
<comment type="subunit">
    <text evidence="1">PSII is composed of 1 copy each of membrane proteins PsbA, PsbB, PsbC, PsbD, PsbE, PsbF, PsbH, PsbI, PsbJ, PsbK, PsbL, PsbM, PsbT, PsbX, PsbY, PsbZ, Psb30/Ycf12, peripheral proteins of the oxygen-evolving complex and a large number of cofactors. It forms dimeric complexes.</text>
</comment>
<comment type="subcellular location">
    <subcellularLocation>
        <location evidence="1">Plastid</location>
        <location evidence="1">Chloroplast thylakoid membrane</location>
        <topology evidence="1">Single-pass membrane protein</topology>
    </subcellularLocation>
</comment>
<comment type="similarity">
    <text evidence="1">Belongs to the Psb30/Ycf12 family.</text>
</comment>
<proteinExistence type="inferred from homology"/>
<organism>
    <name type="scientific">Cycas taitungensis</name>
    <name type="common">Prince sago</name>
    <name type="synonym">Cycas taiwaniana</name>
    <dbReference type="NCBI Taxonomy" id="54799"/>
    <lineage>
        <taxon>Eukaryota</taxon>
        <taxon>Viridiplantae</taxon>
        <taxon>Streptophyta</taxon>
        <taxon>Embryophyta</taxon>
        <taxon>Tracheophyta</taxon>
        <taxon>Spermatophyta</taxon>
        <taxon>Cycadidae</taxon>
        <taxon>Cycadales</taxon>
        <taxon>Cycadaceae</taxon>
        <taxon>Cycas</taxon>
    </lineage>
</organism>
<sequence>MNLEVLAQLTVLTLIVISGPLVIALLAVRKGNL</sequence>
<gene>
    <name evidence="1" type="primary">psb30</name>
    <name evidence="1" type="synonym">ycf12</name>
</gene>
<feature type="chain" id="PRO_0000342352" description="Photosystem II reaction center protein Psb30">
    <location>
        <begin position="1"/>
        <end position="33"/>
    </location>
</feature>
<feature type="transmembrane region" description="Helical" evidence="1">
    <location>
        <begin position="5"/>
        <end position="25"/>
    </location>
</feature>
<reference key="1">
    <citation type="journal article" date="2007" name="Mol. Biol. Evol.">
        <title>Chloroplast genome (cpDNA) of Cycas taitungensis and 56 cp protein-coding genes of Gnetum parvifolium: insights into cpDNA evolution and phylogeny of extant seed plants.</title>
        <authorList>
            <person name="Wu C.-S."/>
            <person name="Wang Y.-N."/>
            <person name="Liu S.-M."/>
            <person name="Chaw S.-M."/>
        </authorList>
    </citation>
    <scope>NUCLEOTIDE SEQUENCE [LARGE SCALE GENOMIC DNA]</scope>
</reference>
<name>PSB30_CYCTA</name>
<evidence type="ECO:0000255" key="1">
    <source>
        <dbReference type="HAMAP-Rule" id="MF_01329"/>
    </source>
</evidence>
<keyword id="KW-0150">Chloroplast</keyword>
<keyword id="KW-0472">Membrane</keyword>
<keyword id="KW-0602">Photosynthesis</keyword>
<keyword id="KW-0604">Photosystem II</keyword>
<keyword id="KW-0934">Plastid</keyword>
<keyword id="KW-0793">Thylakoid</keyword>
<keyword id="KW-0812">Transmembrane</keyword>
<keyword id="KW-1133">Transmembrane helix</keyword>
<geneLocation type="chloroplast"/>
<accession>A6H5F0</accession>
<dbReference type="EMBL" id="AP009339">
    <property type="protein sequence ID" value="BAF64916.1"/>
    <property type="molecule type" value="Genomic_DNA"/>
</dbReference>
<dbReference type="RefSeq" id="YP_001312175.1">
    <property type="nucleotide sequence ID" value="NC_009618.1"/>
</dbReference>
<dbReference type="SMR" id="A6H5F0"/>
<dbReference type="GeneID" id="5309619"/>
<dbReference type="GO" id="GO:0009535">
    <property type="term" value="C:chloroplast thylakoid membrane"/>
    <property type="evidence" value="ECO:0007669"/>
    <property type="project" value="UniProtKB-SubCell"/>
</dbReference>
<dbReference type="GO" id="GO:0009523">
    <property type="term" value="C:photosystem II"/>
    <property type="evidence" value="ECO:0007669"/>
    <property type="project" value="UniProtKB-KW"/>
</dbReference>
<dbReference type="GO" id="GO:0015979">
    <property type="term" value="P:photosynthesis"/>
    <property type="evidence" value="ECO:0007669"/>
    <property type="project" value="UniProtKB-KW"/>
</dbReference>
<dbReference type="HAMAP" id="MF_01329">
    <property type="entry name" value="PSII_Psb30_Ycf12"/>
    <property type="match status" value="1"/>
</dbReference>
<dbReference type="InterPro" id="IPR010284">
    <property type="entry name" value="PSII_Ycf12_core-subunit"/>
</dbReference>
<dbReference type="NCBIfam" id="NF010239">
    <property type="entry name" value="PRK13686.1"/>
    <property type="match status" value="1"/>
</dbReference>
<dbReference type="Pfam" id="PF05969">
    <property type="entry name" value="PSII_Ycf12"/>
    <property type="match status" value="1"/>
</dbReference>
<protein>
    <recommendedName>
        <fullName evidence="1">Photosystem II reaction center protein Psb30</fullName>
    </recommendedName>
    <alternativeName>
        <fullName evidence="1">Photosystem II reaction center protein Ycf12</fullName>
    </alternativeName>
</protein>